<proteinExistence type="inferred from homology"/>
<organism>
    <name type="scientific">Shewanella sp. (strain MR-4)</name>
    <dbReference type="NCBI Taxonomy" id="60480"/>
    <lineage>
        <taxon>Bacteria</taxon>
        <taxon>Pseudomonadati</taxon>
        <taxon>Pseudomonadota</taxon>
        <taxon>Gammaproteobacteria</taxon>
        <taxon>Alteromonadales</taxon>
        <taxon>Shewanellaceae</taxon>
        <taxon>Shewanella</taxon>
    </lineage>
</organism>
<feature type="chain" id="PRO_0000371134" description="ATP synthase subunit delta">
    <location>
        <begin position="1"/>
        <end position="177"/>
    </location>
</feature>
<keyword id="KW-0066">ATP synthesis</keyword>
<keyword id="KW-0997">Cell inner membrane</keyword>
<keyword id="KW-1003">Cell membrane</keyword>
<keyword id="KW-0139">CF(1)</keyword>
<keyword id="KW-0375">Hydrogen ion transport</keyword>
<keyword id="KW-0406">Ion transport</keyword>
<keyword id="KW-0472">Membrane</keyword>
<keyword id="KW-0813">Transport</keyword>
<comment type="function">
    <text evidence="1">F(1)F(0) ATP synthase produces ATP from ADP in the presence of a proton or sodium gradient. F-type ATPases consist of two structural domains, F(1) containing the extramembraneous catalytic core and F(0) containing the membrane proton channel, linked together by a central stalk and a peripheral stalk. During catalysis, ATP synthesis in the catalytic domain of F(1) is coupled via a rotary mechanism of the central stalk subunits to proton translocation.</text>
</comment>
<comment type="function">
    <text evidence="1">This protein is part of the stalk that links CF(0) to CF(1). It either transmits conformational changes from CF(0) to CF(1) or is implicated in proton conduction.</text>
</comment>
<comment type="subunit">
    <text evidence="1">F-type ATPases have 2 components, F(1) - the catalytic core - and F(0) - the membrane proton channel. F(1) has five subunits: alpha(3), beta(3), gamma(1), delta(1), epsilon(1). F(0) has three main subunits: a(1), b(2) and c(10-14). The alpha and beta chains form an alternating ring which encloses part of the gamma chain. F(1) is attached to F(0) by a central stalk formed by the gamma and epsilon chains, while a peripheral stalk is formed by the delta and b chains.</text>
</comment>
<comment type="subcellular location">
    <subcellularLocation>
        <location evidence="1">Cell inner membrane</location>
        <topology evidence="1">Peripheral membrane protein</topology>
    </subcellularLocation>
</comment>
<comment type="similarity">
    <text evidence="1">Belongs to the ATPase delta chain family.</text>
</comment>
<dbReference type="EMBL" id="CP000446">
    <property type="protein sequence ID" value="ABI40991.1"/>
    <property type="molecule type" value="Genomic_DNA"/>
</dbReference>
<dbReference type="RefSeq" id="WP_011624649.1">
    <property type="nucleotide sequence ID" value="NC_008321.1"/>
</dbReference>
<dbReference type="SMR" id="Q0HD76"/>
<dbReference type="KEGG" id="she:Shewmr4_3928"/>
<dbReference type="HOGENOM" id="CLU_085114_3_0_6"/>
<dbReference type="GO" id="GO:0005886">
    <property type="term" value="C:plasma membrane"/>
    <property type="evidence" value="ECO:0007669"/>
    <property type="project" value="UniProtKB-SubCell"/>
</dbReference>
<dbReference type="GO" id="GO:0045259">
    <property type="term" value="C:proton-transporting ATP synthase complex"/>
    <property type="evidence" value="ECO:0007669"/>
    <property type="project" value="UniProtKB-KW"/>
</dbReference>
<dbReference type="GO" id="GO:0046933">
    <property type="term" value="F:proton-transporting ATP synthase activity, rotational mechanism"/>
    <property type="evidence" value="ECO:0007669"/>
    <property type="project" value="UniProtKB-UniRule"/>
</dbReference>
<dbReference type="Gene3D" id="1.10.520.20">
    <property type="entry name" value="N-terminal domain of the delta subunit of the F1F0-ATP synthase"/>
    <property type="match status" value="1"/>
</dbReference>
<dbReference type="HAMAP" id="MF_01416">
    <property type="entry name" value="ATP_synth_delta_bact"/>
    <property type="match status" value="1"/>
</dbReference>
<dbReference type="InterPro" id="IPR026015">
    <property type="entry name" value="ATP_synth_OSCP/delta_N_sf"/>
</dbReference>
<dbReference type="InterPro" id="IPR020781">
    <property type="entry name" value="ATPase_OSCP/d_CS"/>
</dbReference>
<dbReference type="InterPro" id="IPR000711">
    <property type="entry name" value="ATPase_OSCP/dsu"/>
</dbReference>
<dbReference type="NCBIfam" id="TIGR01145">
    <property type="entry name" value="ATP_synt_delta"/>
    <property type="match status" value="1"/>
</dbReference>
<dbReference type="NCBIfam" id="NF004402">
    <property type="entry name" value="PRK05758.2-2"/>
    <property type="match status" value="1"/>
</dbReference>
<dbReference type="NCBIfam" id="NF004404">
    <property type="entry name" value="PRK05758.2-5"/>
    <property type="match status" value="1"/>
</dbReference>
<dbReference type="PANTHER" id="PTHR11910">
    <property type="entry name" value="ATP SYNTHASE DELTA CHAIN"/>
    <property type="match status" value="1"/>
</dbReference>
<dbReference type="Pfam" id="PF00213">
    <property type="entry name" value="OSCP"/>
    <property type="match status" value="1"/>
</dbReference>
<dbReference type="PRINTS" id="PR00125">
    <property type="entry name" value="ATPASEDELTA"/>
</dbReference>
<dbReference type="SUPFAM" id="SSF47928">
    <property type="entry name" value="N-terminal domain of the delta subunit of the F1F0-ATP synthase"/>
    <property type="match status" value="1"/>
</dbReference>
<dbReference type="PROSITE" id="PS00389">
    <property type="entry name" value="ATPASE_DELTA"/>
    <property type="match status" value="1"/>
</dbReference>
<reference key="1">
    <citation type="submission" date="2006-08" db="EMBL/GenBank/DDBJ databases">
        <title>Complete sequence of Shewanella sp. MR-4.</title>
        <authorList>
            <consortium name="US DOE Joint Genome Institute"/>
            <person name="Copeland A."/>
            <person name="Lucas S."/>
            <person name="Lapidus A."/>
            <person name="Barry K."/>
            <person name="Detter J.C."/>
            <person name="Glavina del Rio T."/>
            <person name="Hammon N."/>
            <person name="Israni S."/>
            <person name="Dalin E."/>
            <person name="Tice H."/>
            <person name="Pitluck S."/>
            <person name="Kiss H."/>
            <person name="Brettin T."/>
            <person name="Bruce D."/>
            <person name="Han C."/>
            <person name="Tapia R."/>
            <person name="Gilna P."/>
            <person name="Schmutz J."/>
            <person name="Larimer F."/>
            <person name="Land M."/>
            <person name="Hauser L."/>
            <person name="Kyrpides N."/>
            <person name="Mikhailova N."/>
            <person name="Nealson K."/>
            <person name="Konstantinidis K."/>
            <person name="Klappenbach J."/>
            <person name="Tiedje J."/>
            <person name="Richardson P."/>
        </authorList>
    </citation>
    <scope>NUCLEOTIDE SEQUENCE [LARGE SCALE GENOMIC DNA]</scope>
    <source>
        <strain>MR-4</strain>
    </source>
</reference>
<name>ATPD_SHESM</name>
<evidence type="ECO:0000255" key="1">
    <source>
        <dbReference type="HAMAP-Rule" id="MF_01416"/>
    </source>
</evidence>
<accession>Q0HD76</accession>
<sequence>MAELTTIARPYAKAAFDVAVEHNAVDTWAEMLTFAALVSENETMQPLLTGSLASTKLAALFISVCGEQINEQGQNLIKVMAENGRLKVLPAVSELFAQYRNEWAKEVEADVVSAAELSSEQKQQISISLEKRLARKVKLNCSTDAALIAGVIIKAGDLVIDGSVRGKLSRLSEKLQS</sequence>
<protein>
    <recommendedName>
        <fullName evidence="1">ATP synthase subunit delta</fullName>
    </recommendedName>
    <alternativeName>
        <fullName evidence="1">ATP synthase F(1) sector subunit delta</fullName>
    </alternativeName>
    <alternativeName>
        <fullName evidence="1">F-type ATPase subunit delta</fullName>
        <shortName evidence="1">F-ATPase subunit delta</shortName>
    </alternativeName>
</protein>
<gene>
    <name evidence="1" type="primary">atpH</name>
    <name type="ordered locus">Shewmr4_3928</name>
</gene>